<comment type="function">
    <text evidence="1">Cleaves peptides in various proteins in a process that requires ATP hydrolysis. Has a chymotrypsin-like activity. Plays a major role in the degradation of misfolded proteins.</text>
</comment>
<comment type="catalytic activity">
    <reaction evidence="1">
        <text>Hydrolysis of proteins to small peptides in the presence of ATP and magnesium. alpha-casein is the usual test substrate. In the absence of ATP, only oligopeptides shorter than five residues are hydrolyzed (such as succinyl-Leu-Tyr-|-NHMec, and Leu-Tyr-Leu-|-Tyr-Trp, in which cleavage of the -Tyr-|-Leu- and -Tyr-|-Trp bonds also occurs).</text>
        <dbReference type="EC" id="3.4.21.92"/>
    </reaction>
</comment>
<comment type="subunit">
    <text evidence="1">Fourteen ClpP subunits assemble into 2 heptameric rings which stack back to back to give a disk-like structure with a central cavity, resembling the structure of eukaryotic proteasomes.</text>
</comment>
<comment type="subcellular location">
    <subcellularLocation>
        <location evidence="1">Cytoplasm</location>
    </subcellularLocation>
</comment>
<comment type="similarity">
    <text evidence="1">Belongs to the peptidase S14 family.</text>
</comment>
<feature type="chain" id="PRO_1000026075" description="ATP-dependent Clp protease proteolytic subunit">
    <location>
        <begin position="1"/>
        <end position="217"/>
    </location>
</feature>
<feature type="active site" description="Nucleophile" evidence="1">
    <location>
        <position position="121"/>
    </location>
</feature>
<feature type="active site" evidence="1">
    <location>
        <position position="146"/>
    </location>
</feature>
<sequence>MITRAELLDMLASNAPQGFEAQALGLVPIVVETSGRGERSYDIYSRLLKERLVFMVGEVNDQTANLVVAQLLFLESENPDKDISLYINSPGGSVSAGMAIYDTMQFIKPDVSTLCMGLAASMGAFLLASGAKGKRFALPNSRVMIHQPLGGARGQASDIEIQAREILYLKERLNNLLAQHTGQDVERIARDTDRDNFMSSDDAKAYGLIDQVLLKRP</sequence>
<proteinExistence type="inferred from homology"/>
<gene>
    <name evidence="1" type="primary">clpP</name>
    <name type="ordered locus">Bcep1808_1855</name>
</gene>
<name>CLPP_BURVG</name>
<organism>
    <name type="scientific">Burkholderia vietnamiensis (strain G4 / LMG 22486)</name>
    <name type="common">Burkholderia cepacia (strain R1808)</name>
    <dbReference type="NCBI Taxonomy" id="269482"/>
    <lineage>
        <taxon>Bacteria</taxon>
        <taxon>Pseudomonadati</taxon>
        <taxon>Pseudomonadota</taxon>
        <taxon>Betaproteobacteria</taxon>
        <taxon>Burkholderiales</taxon>
        <taxon>Burkholderiaceae</taxon>
        <taxon>Burkholderia</taxon>
        <taxon>Burkholderia cepacia complex</taxon>
    </lineage>
</organism>
<reference key="1">
    <citation type="submission" date="2007-03" db="EMBL/GenBank/DDBJ databases">
        <title>Complete sequence of chromosome 1 of Burkholderia vietnamiensis G4.</title>
        <authorList>
            <consortium name="US DOE Joint Genome Institute"/>
            <person name="Copeland A."/>
            <person name="Lucas S."/>
            <person name="Lapidus A."/>
            <person name="Barry K."/>
            <person name="Detter J.C."/>
            <person name="Glavina del Rio T."/>
            <person name="Hammon N."/>
            <person name="Israni S."/>
            <person name="Dalin E."/>
            <person name="Tice H."/>
            <person name="Pitluck S."/>
            <person name="Chain P."/>
            <person name="Malfatti S."/>
            <person name="Shin M."/>
            <person name="Vergez L."/>
            <person name="Schmutz J."/>
            <person name="Larimer F."/>
            <person name="Land M."/>
            <person name="Hauser L."/>
            <person name="Kyrpides N."/>
            <person name="Tiedje J."/>
            <person name="Richardson P."/>
        </authorList>
    </citation>
    <scope>NUCLEOTIDE SEQUENCE [LARGE SCALE GENOMIC DNA]</scope>
    <source>
        <strain>G4 / LMG 22486</strain>
    </source>
</reference>
<dbReference type="EC" id="3.4.21.92" evidence="1"/>
<dbReference type="EMBL" id="CP000614">
    <property type="protein sequence ID" value="ABO54858.1"/>
    <property type="molecule type" value="Genomic_DNA"/>
</dbReference>
<dbReference type="SMR" id="A4JF05"/>
<dbReference type="MEROPS" id="S14.001"/>
<dbReference type="KEGG" id="bvi:Bcep1808_1855"/>
<dbReference type="eggNOG" id="COG0740">
    <property type="taxonomic scope" value="Bacteria"/>
</dbReference>
<dbReference type="HOGENOM" id="CLU_058707_3_2_4"/>
<dbReference type="Proteomes" id="UP000002287">
    <property type="component" value="Chromosome 1"/>
</dbReference>
<dbReference type="GO" id="GO:0005737">
    <property type="term" value="C:cytoplasm"/>
    <property type="evidence" value="ECO:0007669"/>
    <property type="project" value="UniProtKB-SubCell"/>
</dbReference>
<dbReference type="GO" id="GO:0009368">
    <property type="term" value="C:endopeptidase Clp complex"/>
    <property type="evidence" value="ECO:0007669"/>
    <property type="project" value="TreeGrafter"/>
</dbReference>
<dbReference type="GO" id="GO:0004176">
    <property type="term" value="F:ATP-dependent peptidase activity"/>
    <property type="evidence" value="ECO:0007669"/>
    <property type="project" value="InterPro"/>
</dbReference>
<dbReference type="GO" id="GO:0051117">
    <property type="term" value="F:ATPase binding"/>
    <property type="evidence" value="ECO:0007669"/>
    <property type="project" value="TreeGrafter"/>
</dbReference>
<dbReference type="GO" id="GO:0004252">
    <property type="term" value="F:serine-type endopeptidase activity"/>
    <property type="evidence" value="ECO:0007669"/>
    <property type="project" value="UniProtKB-UniRule"/>
</dbReference>
<dbReference type="GO" id="GO:0006515">
    <property type="term" value="P:protein quality control for misfolded or incompletely synthesized proteins"/>
    <property type="evidence" value="ECO:0007669"/>
    <property type="project" value="TreeGrafter"/>
</dbReference>
<dbReference type="CDD" id="cd07017">
    <property type="entry name" value="S14_ClpP_2"/>
    <property type="match status" value="1"/>
</dbReference>
<dbReference type="FunFam" id="3.90.226.10:FF:000001">
    <property type="entry name" value="ATP-dependent Clp protease proteolytic subunit"/>
    <property type="match status" value="1"/>
</dbReference>
<dbReference type="Gene3D" id="3.90.226.10">
    <property type="entry name" value="2-enoyl-CoA Hydratase, Chain A, domain 1"/>
    <property type="match status" value="1"/>
</dbReference>
<dbReference type="HAMAP" id="MF_00444">
    <property type="entry name" value="ClpP"/>
    <property type="match status" value="1"/>
</dbReference>
<dbReference type="InterPro" id="IPR001907">
    <property type="entry name" value="ClpP"/>
</dbReference>
<dbReference type="InterPro" id="IPR029045">
    <property type="entry name" value="ClpP/crotonase-like_dom_sf"/>
</dbReference>
<dbReference type="InterPro" id="IPR023562">
    <property type="entry name" value="ClpP/TepA"/>
</dbReference>
<dbReference type="InterPro" id="IPR033135">
    <property type="entry name" value="ClpP_His_AS"/>
</dbReference>
<dbReference type="InterPro" id="IPR018215">
    <property type="entry name" value="ClpP_Ser_AS"/>
</dbReference>
<dbReference type="NCBIfam" id="TIGR00493">
    <property type="entry name" value="clpP"/>
    <property type="match status" value="1"/>
</dbReference>
<dbReference type="NCBIfam" id="NF001368">
    <property type="entry name" value="PRK00277.1"/>
    <property type="match status" value="1"/>
</dbReference>
<dbReference type="NCBIfam" id="NF009205">
    <property type="entry name" value="PRK12553.1"/>
    <property type="match status" value="1"/>
</dbReference>
<dbReference type="PANTHER" id="PTHR10381">
    <property type="entry name" value="ATP-DEPENDENT CLP PROTEASE PROTEOLYTIC SUBUNIT"/>
    <property type="match status" value="1"/>
</dbReference>
<dbReference type="PANTHER" id="PTHR10381:SF70">
    <property type="entry name" value="ATP-DEPENDENT CLP PROTEASE PROTEOLYTIC SUBUNIT"/>
    <property type="match status" value="1"/>
</dbReference>
<dbReference type="Pfam" id="PF00574">
    <property type="entry name" value="CLP_protease"/>
    <property type="match status" value="1"/>
</dbReference>
<dbReference type="PRINTS" id="PR00127">
    <property type="entry name" value="CLPPROTEASEP"/>
</dbReference>
<dbReference type="SUPFAM" id="SSF52096">
    <property type="entry name" value="ClpP/crotonase"/>
    <property type="match status" value="1"/>
</dbReference>
<dbReference type="PROSITE" id="PS00382">
    <property type="entry name" value="CLP_PROTEASE_HIS"/>
    <property type="match status" value="1"/>
</dbReference>
<dbReference type="PROSITE" id="PS00381">
    <property type="entry name" value="CLP_PROTEASE_SER"/>
    <property type="match status" value="1"/>
</dbReference>
<evidence type="ECO:0000255" key="1">
    <source>
        <dbReference type="HAMAP-Rule" id="MF_00444"/>
    </source>
</evidence>
<accession>A4JF05</accession>
<keyword id="KW-0963">Cytoplasm</keyword>
<keyword id="KW-0378">Hydrolase</keyword>
<keyword id="KW-0645">Protease</keyword>
<keyword id="KW-0720">Serine protease</keyword>
<protein>
    <recommendedName>
        <fullName evidence="1">ATP-dependent Clp protease proteolytic subunit</fullName>
        <ecNumber evidence="1">3.4.21.92</ecNumber>
    </recommendedName>
    <alternativeName>
        <fullName evidence="1">Endopeptidase Clp</fullName>
    </alternativeName>
</protein>